<dbReference type="EC" id="1.1.1.86" evidence="1"/>
<dbReference type="EMBL" id="CP000713">
    <property type="protein sequence ID" value="ABQ93566.1"/>
    <property type="molecule type" value="Genomic_DNA"/>
</dbReference>
<dbReference type="SMR" id="A5WD25"/>
<dbReference type="STRING" id="349106.PsycPRwf_0611"/>
<dbReference type="KEGG" id="prw:PsycPRwf_0611"/>
<dbReference type="eggNOG" id="COG0059">
    <property type="taxonomic scope" value="Bacteria"/>
</dbReference>
<dbReference type="HOGENOM" id="CLU_033821_0_1_6"/>
<dbReference type="UniPathway" id="UPA00047">
    <property type="reaction ID" value="UER00056"/>
</dbReference>
<dbReference type="UniPathway" id="UPA00049">
    <property type="reaction ID" value="UER00060"/>
</dbReference>
<dbReference type="GO" id="GO:0005829">
    <property type="term" value="C:cytosol"/>
    <property type="evidence" value="ECO:0007669"/>
    <property type="project" value="TreeGrafter"/>
</dbReference>
<dbReference type="GO" id="GO:0004455">
    <property type="term" value="F:ketol-acid reductoisomerase activity"/>
    <property type="evidence" value="ECO:0007669"/>
    <property type="project" value="UniProtKB-UniRule"/>
</dbReference>
<dbReference type="GO" id="GO:0000287">
    <property type="term" value="F:magnesium ion binding"/>
    <property type="evidence" value="ECO:0007669"/>
    <property type="project" value="UniProtKB-UniRule"/>
</dbReference>
<dbReference type="GO" id="GO:0050661">
    <property type="term" value="F:NADP binding"/>
    <property type="evidence" value="ECO:0007669"/>
    <property type="project" value="InterPro"/>
</dbReference>
<dbReference type="GO" id="GO:0009097">
    <property type="term" value="P:isoleucine biosynthetic process"/>
    <property type="evidence" value="ECO:0007669"/>
    <property type="project" value="UniProtKB-UniRule"/>
</dbReference>
<dbReference type="GO" id="GO:0009099">
    <property type="term" value="P:L-valine biosynthetic process"/>
    <property type="evidence" value="ECO:0007669"/>
    <property type="project" value="UniProtKB-UniRule"/>
</dbReference>
<dbReference type="FunFam" id="3.40.50.720:FF:000023">
    <property type="entry name" value="Ketol-acid reductoisomerase (NADP(+))"/>
    <property type="match status" value="1"/>
</dbReference>
<dbReference type="Gene3D" id="6.10.240.10">
    <property type="match status" value="1"/>
</dbReference>
<dbReference type="Gene3D" id="3.40.50.720">
    <property type="entry name" value="NAD(P)-binding Rossmann-like Domain"/>
    <property type="match status" value="1"/>
</dbReference>
<dbReference type="HAMAP" id="MF_00435">
    <property type="entry name" value="IlvC"/>
    <property type="match status" value="1"/>
</dbReference>
<dbReference type="InterPro" id="IPR008927">
    <property type="entry name" value="6-PGluconate_DH-like_C_sf"/>
</dbReference>
<dbReference type="InterPro" id="IPR013023">
    <property type="entry name" value="KARI"/>
</dbReference>
<dbReference type="InterPro" id="IPR000506">
    <property type="entry name" value="KARI_C"/>
</dbReference>
<dbReference type="InterPro" id="IPR013116">
    <property type="entry name" value="KARI_N"/>
</dbReference>
<dbReference type="InterPro" id="IPR014359">
    <property type="entry name" value="KARI_prok"/>
</dbReference>
<dbReference type="InterPro" id="IPR036291">
    <property type="entry name" value="NAD(P)-bd_dom_sf"/>
</dbReference>
<dbReference type="NCBIfam" id="TIGR00465">
    <property type="entry name" value="ilvC"/>
    <property type="match status" value="1"/>
</dbReference>
<dbReference type="NCBIfam" id="NF004017">
    <property type="entry name" value="PRK05479.1"/>
    <property type="match status" value="1"/>
</dbReference>
<dbReference type="NCBIfam" id="NF009940">
    <property type="entry name" value="PRK13403.1"/>
    <property type="match status" value="1"/>
</dbReference>
<dbReference type="PANTHER" id="PTHR21371">
    <property type="entry name" value="KETOL-ACID REDUCTOISOMERASE, MITOCHONDRIAL"/>
    <property type="match status" value="1"/>
</dbReference>
<dbReference type="PANTHER" id="PTHR21371:SF1">
    <property type="entry name" value="KETOL-ACID REDUCTOISOMERASE, MITOCHONDRIAL"/>
    <property type="match status" value="1"/>
</dbReference>
<dbReference type="Pfam" id="PF01450">
    <property type="entry name" value="KARI_C"/>
    <property type="match status" value="1"/>
</dbReference>
<dbReference type="Pfam" id="PF07991">
    <property type="entry name" value="KARI_N"/>
    <property type="match status" value="1"/>
</dbReference>
<dbReference type="PIRSF" id="PIRSF000116">
    <property type="entry name" value="IlvC_gammaproteo"/>
    <property type="match status" value="1"/>
</dbReference>
<dbReference type="SUPFAM" id="SSF48179">
    <property type="entry name" value="6-phosphogluconate dehydrogenase C-terminal domain-like"/>
    <property type="match status" value="1"/>
</dbReference>
<dbReference type="SUPFAM" id="SSF51735">
    <property type="entry name" value="NAD(P)-binding Rossmann-fold domains"/>
    <property type="match status" value="1"/>
</dbReference>
<dbReference type="PROSITE" id="PS51851">
    <property type="entry name" value="KARI_C"/>
    <property type="match status" value="1"/>
</dbReference>
<dbReference type="PROSITE" id="PS51850">
    <property type="entry name" value="KARI_N"/>
    <property type="match status" value="1"/>
</dbReference>
<comment type="function">
    <text evidence="1">Involved in the biosynthesis of branched-chain amino acids (BCAA). Catalyzes an alkyl-migration followed by a ketol-acid reduction of (S)-2-acetolactate (S2AL) to yield (R)-2,3-dihydroxy-isovalerate. In the isomerase reaction, S2AL is rearranged via a Mg-dependent methyl migration to produce 3-hydroxy-3-methyl-2-ketobutyrate (HMKB). In the reductase reaction, this 2-ketoacid undergoes a metal-dependent reduction by NADPH to yield (R)-2,3-dihydroxy-isovalerate.</text>
</comment>
<comment type="catalytic activity">
    <reaction evidence="1">
        <text>(2R)-2,3-dihydroxy-3-methylbutanoate + NADP(+) = (2S)-2-acetolactate + NADPH + H(+)</text>
        <dbReference type="Rhea" id="RHEA:22068"/>
        <dbReference type="ChEBI" id="CHEBI:15378"/>
        <dbReference type="ChEBI" id="CHEBI:49072"/>
        <dbReference type="ChEBI" id="CHEBI:57783"/>
        <dbReference type="ChEBI" id="CHEBI:58349"/>
        <dbReference type="ChEBI" id="CHEBI:58476"/>
        <dbReference type="EC" id="1.1.1.86"/>
    </reaction>
</comment>
<comment type="catalytic activity">
    <reaction evidence="1">
        <text>(2R,3R)-2,3-dihydroxy-3-methylpentanoate + NADP(+) = (S)-2-ethyl-2-hydroxy-3-oxobutanoate + NADPH + H(+)</text>
        <dbReference type="Rhea" id="RHEA:13493"/>
        <dbReference type="ChEBI" id="CHEBI:15378"/>
        <dbReference type="ChEBI" id="CHEBI:49256"/>
        <dbReference type="ChEBI" id="CHEBI:49258"/>
        <dbReference type="ChEBI" id="CHEBI:57783"/>
        <dbReference type="ChEBI" id="CHEBI:58349"/>
        <dbReference type="EC" id="1.1.1.86"/>
    </reaction>
</comment>
<comment type="cofactor">
    <cofactor evidence="1">
        <name>Mg(2+)</name>
        <dbReference type="ChEBI" id="CHEBI:18420"/>
    </cofactor>
    <text evidence="1">Binds 2 magnesium ions per subunit.</text>
</comment>
<comment type="pathway">
    <text evidence="1">Amino-acid biosynthesis; L-isoleucine biosynthesis; L-isoleucine from 2-oxobutanoate: step 2/4.</text>
</comment>
<comment type="pathway">
    <text evidence="1">Amino-acid biosynthesis; L-valine biosynthesis; L-valine from pyruvate: step 2/4.</text>
</comment>
<comment type="similarity">
    <text evidence="1">Belongs to the ketol-acid reductoisomerase family.</text>
</comment>
<organism>
    <name type="scientific">Psychrobacter sp. (strain PRwf-1)</name>
    <dbReference type="NCBI Taxonomy" id="349106"/>
    <lineage>
        <taxon>Bacteria</taxon>
        <taxon>Pseudomonadati</taxon>
        <taxon>Pseudomonadota</taxon>
        <taxon>Gammaproteobacteria</taxon>
        <taxon>Moraxellales</taxon>
        <taxon>Moraxellaceae</taxon>
        <taxon>Psychrobacter</taxon>
    </lineage>
</organism>
<proteinExistence type="inferred from homology"/>
<reference key="1">
    <citation type="submission" date="2007-05" db="EMBL/GenBank/DDBJ databases">
        <title>Complete sequence of chromosome of Psychrobacter sp. PRwf-1.</title>
        <authorList>
            <consortium name="US DOE Joint Genome Institute"/>
            <person name="Copeland A."/>
            <person name="Lucas S."/>
            <person name="Lapidus A."/>
            <person name="Barry K."/>
            <person name="Detter J.C."/>
            <person name="Glavina del Rio T."/>
            <person name="Hammon N."/>
            <person name="Israni S."/>
            <person name="Dalin E."/>
            <person name="Tice H."/>
            <person name="Pitluck S."/>
            <person name="Chain P."/>
            <person name="Malfatti S."/>
            <person name="Shin M."/>
            <person name="Vergez L."/>
            <person name="Schmutz J."/>
            <person name="Larimer F."/>
            <person name="Land M."/>
            <person name="Hauser L."/>
            <person name="Kyrpides N."/>
            <person name="Kim E."/>
            <person name="Tiedje J."/>
            <person name="Richardson P."/>
        </authorList>
    </citation>
    <scope>NUCLEOTIDE SEQUENCE [LARGE SCALE GENOMIC DNA]</scope>
    <source>
        <strain>PRwf-1</strain>
    </source>
</reference>
<protein>
    <recommendedName>
        <fullName evidence="1">Ketol-acid reductoisomerase (NADP(+))</fullName>
        <shortName evidence="1">KARI</shortName>
        <ecNumber evidence="1">1.1.1.86</ecNumber>
    </recommendedName>
    <alternativeName>
        <fullName evidence="1">Acetohydroxy-acid isomeroreductase</fullName>
        <shortName evidence="1">AHIR</shortName>
    </alternativeName>
    <alternativeName>
        <fullName evidence="1">Alpha-keto-beta-hydroxylacyl reductoisomerase</fullName>
    </alternativeName>
    <alternativeName>
        <fullName evidence="1">Ketol-acid reductoisomerase type 1</fullName>
    </alternativeName>
    <alternativeName>
        <fullName evidence="1">Ketol-acid reductoisomerase type I</fullName>
    </alternativeName>
</protein>
<keyword id="KW-0028">Amino-acid biosynthesis</keyword>
<keyword id="KW-0100">Branched-chain amino acid biosynthesis</keyword>
<keyword id="KW-0460">Magnesium</keyword>
<keyword id="KW-0479">Metal-binding</keyword>
<keyword id="KW-0521">NADP</keyword>
<keyword id="KW-0560">Oxidoreductase</keyword>
<name>ILVC_PSYWF</name>
<sequence length="338" mass="36832">MNVYYDKDCDLSIIQAKKVAIIGYGSQGHAHALNLQDSGVDVTVGLRKDSGSWKKAENAGLKVAEVAQAVQAADVVMILTPDEFQKSLYEDVIEPNIKEGATLAFAHGFAIHYNQVVPRKDLDVIMVAPKAPGHTVRSEFVKGGGIPDLIAIYQDASGQAKQVALSYASGVGGGRSGIIETTFKDETETDLFGEQAVLCGGAVELVKMGFETLTEAGYAPEMAYFECLHELKLIVDLMYEGGIADMNYSISNNAEYGEYVTGPEVINEQSREAMRNALKRIQSGEYAKMFITEGATNYPSMTARRRNNADHEIEKTGAKLRSMMPWIGGNKIIDKEKN</sequence>
<gene>
    <name evidence="1" type="primary">ilvC</name>
    <name type="ordered locus">PsycPRwf_0611</name>
</gene>
<feature type="chain" id="PRO_1000072325" description="Ketol-acid reductoisomerase (NADP(+))">
    <location>
        <begin position="1"/>
        <end position="338"/>
    </location>
</feature>
<feature type="domain" description="KARI N-terminal Rossmann" evidence="2">
    <location>
        <begin position="1"/>
        <end position="181"/>
    </location>
</feature>
<feature type="domain" description="KARI C-terminal knotted" evidence="3">
    <location>
        <begin position="182"/>
        <end position="327"/>
    </location>
</feature>
<feature type="active site" evidence="1">
    <location>
        <position position="107"/>
    </location>
</feature>
<feature type="binding site" evidence="1">
    <location>
        <begin position="24"/>
        <end position="27"/>
    </location>
    <ligand>
        <name>NADP(+)</name>
        <dbReference type="ChEBI" id="CHEBI:58349"/>
    </ligand>
</feature>
<feature type="binding site" evidence="1">
    <location>
        <position position="47"/>
    </location>
    <ligand>
        <name>NADP(+)</name>
        <dbReference type="ChEBI" id="CHEBI:58349"/>
    </ligand>
</feature>
<feature type="binding site" evidence="1">
    <location>
        <position position="50"/>
    </location>
    <ligand>
        <name>NADP(+)</name>
        <dbReference type="ChEBI" id="CHEBI:58349"/>
    </ligand>
</feature>
<feature type="binding site" evidence="1">
    <location>
        <position position="52"/>
    </location>
    <ligand>
        <name>NADP(+)</name>
        <dbReference type="ChEBI" id="CHEBI:58349"/>
    </ligand>
</feature>
<feature type="binding site" evidence="1">
    <location>
        <begin position="82"/>
        <end position="85"/>
    </location>
    <ligand>
        <name>NADP(+)</name>
        <dbReference type="ChEBI" id="CHEBI:58349"/>
    </ligand>
</feature>
<feature type="binding site" evidence="1">
    <location>
        <position position="133"/>
    </location>
    <ligand>
        <name>NADP(+)</name>
        <dbReference type="ChEBI" id="CHEBI:58349"/>
    </ligand>
</feature>
<feature type="binding site" evidence="1">
    <location>
        <position position="190"/>
    </location>
    <ligand>
        <name>Mg(2+)</name>
        <dbReference type="ChEBI" id="CHEBI:18420"/>
        <label>1</label>
    </ligand>
</feature>
<feature type="binding site" evidence="1">
    <location>
        <position position="190"/>
    </location>
    <ligand>
        <name>Mg(2+)</name>
        <dbReference type="ChEBI" id="CHEBI:18420"/>
        <label>2</label>
    </ligand>
</feature>
<feature type="binding site" evidence="1">
    <location>
        <position position="194"/>
    </location>
    <ligand>
        <name>Mg(2+)</name>
        <dbReference type="ChEBI" id="CHEBI:18420"/>
        <label>1</label>
    </ligand>
</feature>
<feature type="binding site" evidence="1">
    <location>
        <position position="226"/>
    </location>
    <ligand>
        <name>Mg(2+)</name>
        <dbReference type="ChEBI" id="CHEBI:18420"/>
        <label>2</label>
    </ligand>
</feature>
<feature type="binding site" evidence="1">
    <location>
        <position position="230"/>
    </location>
    <ligand>
        <name>Mg(2+)</name>
        <dbReference type="ChEBI" id="CHEBI:18420"/>
        <label>2</label>
    </ligand>
</feature>
<feature type="binding site" evidence="1">
    <location>
        <position position="251"/>
    </location>
    <ligand>
        <name>substrate</name>
    </ligand>
</feature>
<accession>A5WD25</accession>
<evidence type="ECO:0000255" key="1">
    <source>
        <dbReference type="HAMAP-Rule" id="MF_00435"/>
    </source>
</evidence>
<evidence type="ECO:0000255" key="2">
    <source>
        <dbReference type="PROSITE-ProRule" id="PRU01197"/>
    </source>
</evidence>
<evidence type="ECO:0000255" key="3">
    <source>
        <dbReference type="PROSITE-ProRule" id="PRU01198"/>
    </source>
</evidence>